<protein>
    <recommendedName>
        <fullName>CASP-like protein 1U4</fullName>
        <shortName>SbCASPL1U4</shortName>
    </recommendedName>
</protein>
<comment type="subunit">
    <text evidence="1">Homodimer and heterodimers.</text>
</comment>
<comment type="subcellular location">
    <subcellularLocation>
        <location evidence="1">Cell membrane</location>
        <topology evidence="1">Multi-pass membrane protein</topology>
    </subcellularLocation>
</comment>
<comment type="similarity">
    <text evidence="3">Belongs to the Casparian strip membrane proteins (CASP) family.</text>
</comment>
<name>CSPLF_SORBI</name>
<proteinExistence type="evidence at transcript level"/>
<organism>
    <name type="scientific">Sorghum bicolor</name>
    <name type="common">Sorghum</name>
    <name type="synonym">Sorghum vulgare</name>
    <dbReference type="NCBI Taxonomy" id="4558"/>
    <lineage>
        <taxon>Eukaryota</taxon>
        <taxon>Viridiplantae</taxon>
        <taxon>Streptophyta</taxon>
        <taxon>Embryophyta</taxon>
        <taxon>Tracheophyta</taxon>
        <taxon>Spermatophyta</taxon>
        <taxon>Magnoliopsida</taxon>
        <taxon>Liliopsida</taxon>
        <taxon>Poales</taxon>
        <taxon>Poaceae</taxon>
        <taxon>PACMAD clade</taxon>
        <taxon>Panicoideae</taxon>
        <taxon>Andropogonodae</taxon>
        <taxon>Andropogoneae</taxon>
        <taxon>Sorghinae</taxon>
        <taxon>Sorghum</taxon>
    </lineage>
</organism>
<reference key="1">
    <citation type="journal article" date="2009" name="Nature">
        <title>The Sorghum bicolor genome and the diversification of grasses.</title>
        <authorList>
            <person name="Paterson A.H."/>
            <person name="Bowers J.E."/>
            <person name="Bruggmann R."/>
            <person name="Dubchak I."/>
            <person name="Grimwood J."/>
            <person name="Gundlach H."/>
            <person name="Haberer G."/>
            <person name="Hellsten U."/>
            <person name="Mitros T."/>
            <person name="Poliakov A."/>
            <person name="Schmutz J."/>
            <person name="Spannagl M."/>
            <person name="Tang H."/>
            <person name="Wang X."/>
            <person name="Wicker T."/>
            <person name="Bharti A.K."/>
            <person name="Chapman J."/>
            <person name="Feltus F.A."/>
            <person name="Gowik U."/>
            <person name="Grigoriev I.V."/>
            <person name="Lyons E."/>
            <person name="Maher C.A."/>
            <person name="Martis M."/>
            <person name="Narechania A."/>
            <person name="Otillar R.P."/>
            <person name="Penning B.W."/>
            <person name="Salamov A.A."/>
            <person name="Wang Y."/>
            <person name="Zhang L."/>
            <person name="Carpita N.C."/>
            <person name="Freeling M."/>
            <person name="Gingle A.R."/>
            <person name="Hash C.T."/>
            <person name="Keller B."/>
            <person name="Klein P."/>
            <person name="Kresovich S."/>
            <person name="McCann M.C."/>
            <person name="Ming R."/>
            <person name="Peterson D.G."/>
            <person name="Mehboob-ur-Rahman M."/>
            <person name="Ware D."/>
            <person name="Westhoff P."/>
            <person name="Mayer K.F.X."/>
            <person name="Messing J."/>
            <person name="Rokhsar D.S."/>
        </authorList>
    </citation>
    <scope>NUCLEOTIDE SEQUENCE [LARGE SCALE GENOMIC DNA]</scope>
    <source>
        <strain>cv. BTx623</strain>
    </source>
</reference>
<reference key="2">
    <citation type="journal article" date="2018" name="Plant J.">
        <title>The Sorghum bicolor reference genome: improved assembly, gene annotations, a transcriptome atlas, and signatures of genome organization.</title>
        <authorList>
            <person name="McCormick R.F."/>
            <person name="Truong S.K."/>
            <person name="Sreedasyam A."/>
            <person name="Jenkins J."/>
            <person name="Shu S."/>
            <person name="Sims D."/>
            <person name="Kennedy M."/>
            <person name="Amirebrahimi M."/>
            <person name="Weers B.D."/>
            <person name="McKinley B."/>
            <person name="Mattison A."/>
            <person name="Morishige D.T."/>
            <person name="Grimwood J."/>
            <person name="Schmutz J."/>
            <person name="Mullet J.E."/>
        </authorList>
    </citation>
    <scope>GENOME REANNOTATION</scope>
    <source>
        <strain>cv. BTx623</strain>
    </source>
</reference>
<reference key="3">
    <citation type="journal article" date="2014" name="Plant Physiol.">
        <title>Functional and evolutionary analysis of the CASPARIAN STRIP MEMBRANE DOMAIN PROTEIN family.</title>
        <authorList>
            <person name="Roppolo D."/>
            <person name="Boeckmann B."/>
            <person name="Pfister A."/>
            <person name="Boutet E."/>
            <person name="Rubio M.C."/>
            <person name="Denervaud-Tendon V."/>
            <person name="Vermeer J.E."/>
            <person name="Gheyselinck J."/>
            <person name="Xenarios I."/>
            <person name="Geldner N."/>
        </authorList>
    </citation>
    <scope>GENE FAMILY</scope>
    <scope>NOMENCLATURE</scope>
</reference>
<sequence length="202" mass="21751">MCLPAKWLHPVSLIFRVAGIGLAAVSAAAMLTASQCTVYADYGWRPRTVTYSDFPAFVYLVAATAIATLLEAVALFLSWSKKGKSKKSWRVLTMLLLGAVVPALLYTSAGAAFAVGWEDIYYYLEPIGRRFSVCRSSVAGGRFCEHVHVSMWLALGAAVAVSFAEFLTTFRWCHGSGSCSDSDSDSDSDSESGCGHGCHCKH</sequence>
<feature type="chain" id="PRO_0000391560" description="CASP-like protein 1U4">
    <location>
        <begin position="1"/>
        <end position="202"/>
    </location>
</feature>
<feature type="topological domain" description="Cytoplasmic" evidence="2">
    <location>
        <begin position="1"/>
        <end position="10"/>
    </location>
</feature>
<feature type="transmembrane region" description="Helical" evidence="2">
    <location>
        <begin position="11"/>
        <end position="31"/>
    </location>
</feature>
<feature type="topological domain" description="Extracellular" evidence="2">
    <location>
        <begin position="32"/>
        <end position="56"/>
    </location>
</feature>
<feature type="transmembrane region" description="Helical" evidence="2">
    <location>
        <begin position="57"/>
        <end position="77"/>
    </location>
</feature>
<feature type="topological domain" description="Cytoplasmic" evidence="2">
    <location>
        <begin position="78"/>
        <end position="94"/>
    </location>
</feature>
<feature type="transmembrane region" description="Helical" evidence="2">
    <location>
        <begin position="95"/>
        <end position="115"/>
    </location>
</feature>
<feature type="topological domain" description="Extracellular" evidence="2">
    <location>
        <begin position="116"/>
        <end position="146"/>
    </location>
</feature>
<feature type="transmembrane region" description="Helical" evidence="2">
    <location>
        <begin position="147"/>
        <end position="167"/>
    </location>
</feature>
<feature type="topological domain" description="Cytoplasmic" evidence="2">
    <location>
        <begin position="168"/>
        <end position="202"/>
    </location>
</feature>
<accession>C5Y7C8</accession>
<dbReference type="EMBL" id="CM000764">
    <property type="protein sequence ID" value="EES10194.1"/>
    <property type="molecule type" value="Genomic_DNA"/>
</dbReference>
<dbReference type="EnsemblPlants" id="EES10194">
    <property type="protein sequence ID" value="EES10194"/>
    <property type="gene ID" value="SORBI_3005G202400"/>
</dbReference>
<dbReference type="Gramene" id="EES10194">
    <property type="protein sequence ID" value="EES10194"/>
    <property type="gene ID" value="SORBI_3005G202400"/>
</dbReference>
<dbReference type="KEGG" id="sbi:8082050"/>
<dbReference type="eggNOG" id="ENOG502R5WE">
    <property type="taxonomic scope" value="Eukaryota"/>
</dbReference>
<dbReference type="HOGENOM" id="CLU_117400_0_0_1"/>
<dbReference type="InParanoid" id="C5Y7C8"/>
<dbReference type="OMA" id="DIYYYME"/>
<dbReference type="OrthoDB" id="692805at2759"/>
<dbReference type="Proteomes" id="UP000000768">
    <property type="component" value="Chromosome 5"/>
</dbReference>
<dbReference type="GO" id="GO:0005886">
    <property type="term" value="C:plasma membrane"/>
    <property type="evidence" value="ECO:0007669"/>
    <property type="project" value="UniProtKB-SubCell"/>
</dbReference>
<dbReference type="InterPro" id="IPR006459">
    <property type="entry name" value="CASP/CASPL"/>
</dbReference>
<dbReference type="InterPro" id="IPR006702">
    <property type="entry name" value="CASP_dom"/>
</dbReference>
<dbReference type="InterPro" id="IPR044173">
    <property type="entry name" value="CASPL"/>
</dbReference>
<dbReference type="NCBIfam" id="TIGR01569">
    <property type="entry name" value="A_tha_TIGR01569"/>
    <property type="match status" value="1"/>
</dbReference>
<dbReference type="PANTHER" id="PTHR36488">
    <property type="entry name" value="CASP-LIKE PROTEIN 1U1"/>
    <property type="match status" value="1"/>
</dbReference>
<dbReference type="PANTHER" id="PTHR36488:SF6">
    <property type="entry name" value="CASP-LIKE PROTEIN 1U4"/>
    <property type="match status" value="1"/>
</dbReference>
<dbReference type="Pfam" id="PF04535">
    <property type="entry name" value="CASP_dom"/>
    <property type="match status" value="1"/>
</dbReference>
<gene>
    <name type="ordered locus">Sb05g025810</name>
</gene>
<keyword id="KW-1003">Cell membrane</keyword>
<keyword id="KW-0472">Membrane</keyword>
<keyword id="KW-1185">Reference proteome</keyword>
<keyword id="KW-0812">Transmembrane</keyword>
<keyword id="KW-1133">Transmembrane helix</keyword>
<evidence type="ECO:0000250" key="1"/>
<evidence type="ECO:0000255" key="2"/>
<evidence type="ECO:0000305" key="3"/>